<organism>
    <name type="scientific">Aeromonas salmonicida (strain A449)</name>
    <dbReference type="NCBI Taxonomy" id="382245"/>
    <lineage>
        <taxon>Bacteria</taxon>
        <taxon>Pseudomonadati</taxon>
        <taxon>Pseudomonadota</taxon>
        <taxon>Gammaproteobacteria</taxon>
        <taxon>Aeromonadales</taxon>
        <taxon>Aeromonadaceae</taxon>
        <taxon>Aeromonas</taxon>
    </lineage>
</organism>
<gene>
    <name evidence="1" type="primary">clpS</name>
    <name type="ordered locus">ASA_2447</name>
</gene>
<dbReference type="EMBL" id="CP000644">
    <property type="protein sequence ID" value="ABO90490.1"/>
    <property type="molecule type" value="Genomic_DNA"/>
</dbReference>
<dbReference type="RefSeq" id="WP_005310725.1">
    <property type="nucleotide sequence ID" value="NC_009348.1"/>
</dbReference>
<dbReference type="SMR" id="A4SNL8"/>
<dbReference type="STRING" id="29491.GCA_000820065_01479"/>
<dbReference type="GeneID" id="92723096"/>
<dbReference type="KEGG" id="asa:ASA_2447"/>
<dbReference type="eggNOG" id="COG2127">
    <property type="taxonomic scope" value="Bacteria"/>
</dbReference>
<dbReference type="HOGENOM" id="CLU_134358_2_1_6"/>
<dbReference type="Proteomes" id="UP000000225">
    <property type="component" value="Chromosome"/>
</dbReference>
<dbReference type="GO" id="GO:0030163">
    <property type="term" value="P:protein catabolic process"/>
    <property type="evidence" value="ECO:0007669"/>
    <property type="project" value="InterPro"/>
</dbReference>
<dbReference type="GO" id="GO:0006508">
    <property type="term" value="P:proteolysis"/>
    <property type="evidence" value="ECO:0007669"/>
    <property type="project" value="UniProtKB-UniRule"/>
</dbReference>
<dbReference type="FunFam" id="3.30.1390.10:FF:000002">
    <property type="entry name" value="ATP-dependent Clp protease adapter protein ClpS"/>
    <property type="match status" value="1"/>
</dbReference>
<dbReference type="Gene3D" id="3.30.1390.10">
    <property type="match status" value="1"/>
</dbReference>
<dbReference type="HAMAP" id="MF_00302">
    <property type="entry name" value="ClpS"/>
    <property type="match status" value="1"/>
</dbReference>
<dbReference type="InterPro" id="IPR022935">
    <property type="entry name" value="ClpS"/>
</dbReference>
<dbReference type="InterPro" id="IPR003769">
    <property type="entry name" value="ClpS_core"/>
</dbReference>
<dbReference type="InterPro" id="IPR014719">
    <property type="entry name" value="Ribosomal_bL12_C/ClpS-like"/>
</dbReference>
<dbReference type="NCBIfam" id="NF000670">
    <property type="entry name" value="PRK00033.1-3"/>
    <property type="match status" value="1"/>
</dbReference>
<dbReference type="NCBIfam" id="NF000672">
    <property type="entry name" value="PRK00033.1-5"/>
    <property type="match status" value="1"/>
</dbReference>
<dbReference type="PANTHER" id="PTHR33473:SF19">
    <property type="entry name" value="ATP-DEPENDENT CLP PROTEASE ADAPTER PROTEIN CLPS"/>
    <property type="match status" value="1"/>
</dbReference>
<dbReference type="PANTHER" id="PTHR33473">
    <property type="entry name" value="ATP-DEPENDENT CLP PROTEASE ADAPTER PROTEIN CLPS1, CHLOROPLASTIC"/>
    <property type="match status" value="1"/>
</dbReference>
<dbReference type="Pfam" id="PF02617">
    <property type="entry name" value="ClpS"/>
    <property type="match status" value="1"/>
</dbReference>
<dbReference type="SUPFAM" id="SSF54736">
    <property type="entry name" value="ClpS-like"/>
    <property type="match status" value="1"/>
</dbReference>
<reference key="1">
    <citation type="journal article" date="2008" name="BMC Genomics">
        <title>The genome of Aeromonas salmonicida subsp. salmonicida A449: insights into the evolution of a fish pathogen.</title>
        <authorList>
            <person name="Reith M.E."/>
            <person name="Singh R.K."/>
            <person name="Curtis B."/>
            <person name="Boyd J.M."/>
            <person name="Bouevitch A."/>
            <person name="Kimball J."/>
            <person name="Munholland J."/>
            <person name="Murphy C."/>
            <person name="Sarty D."/>
            <person name="Williams J."/>
            <person name="Nash J.H."/>
            <person name="Johnson S.C."/>
            <person name="Brown L.L."/>
        </authorList>
    </citation>
    <scope>NUCLEOTIDE SEQUENCE [LARGE SCALE GENOMIC DNA]</scope>
    <source>
        <strain>A449</strain>
    </source>
</reference>
<protein>
    <recommendedName>
        <fullName evidence="1">ATP-dependent Clp protease adapter protein ClpS</fullName>
    </recommendedName>
</protein>
<sequence>MSKQKELFANEEIAQAEKTKLQPPPMYKVVLNNDDYTPMEFVVEVLQKFFGMDLDKATQVMLSVHYSGKGVCGTFTAEIAETKVVQVNTYSRNNEHPLLCTMEKA</sequence>
<accession>A4SNL8</accession>
<feature type="chain" id="PRO_0000300697" description="ATP-dependent Clp protease adapter protein ClpS">
    <location>
        <begin position="1"/>
        <end position="105"/>
    </location>
</feature>
<proteinExistence type="inferred from homology"/>
<evidence type="ECO:0000255" key="1">
    <source>
        <dbReference type="HAMAP-Rule" id="MF_00302"/>
    </source>
</evidence>
<comment type="function">
    <text evidence="1">Involved in the modulation of the specificity of the ClpAP-mediated ATP-dependent protein degradation.</text>
</comment>
<comment type="subunit">
    <text evidence="1">Binds to the N-terminal domain of the chaperone ClpA.</text>
</comment>
<comment type="similarity">
    <text evidence="1">Belongs to the ClpS family.</text>
</comment>
<name>CLPS_AERS4</name>